<protein>
    <recommendedName>
        <fullName evidence="1">tRNA uridine(34) hydroxylase</fullName>
        <ecNumber evidence="1">1.14.-.-</ecNumber>
    </recommendedName>
    <alternativeName>
        <fullName evidence="1">tRNA hydroxylation protein O</fullName>
    </alternativeName>
</protein>
<dbReference type="EC" id="1.14.-.-" evidence="1"/>
<dbReference type="EMBL" id="BX842651">
    <property type="protein sequence ID" value="CAE79971.1"/>
    <property type="molecule type" value="Genomic_DNA"/>
</dbReference>
<dbReference type="RefSeq" id="WP_011164573.1">
    <property type="nucleotide sequence ID" value="NC_005363.1"/>
</dbReference>
<dbReference type="SMR" id="Q6ML86"/>
<dbReference type="STRING" id="264462.Bd2131"/>
<dbReference type="GeneID" id="93013072"/>
<dbReference type="KEGG" id="bba:Bd2131"/>
<dbReference type="eggNOG" id="COG1054">
    <property type="taxonomic scope" value="Bacteria"/>
</dbReference>
<dbReference type="HOGENOM" id="CLU_038878_0_1_7"/>
<dbReference type="Proteomes" id="UP000008080">
    <property type="component" value="Chromosome"/>
</dbReference>
<dbReference type="GO" id="GO:0016705">
    <property type="term" value="F:oxidoreductase activity, acting on paired donors, with incorporation or reduction of molecular oxygen"/>
    <property type="evidence" value="ECO:0007669"/>
    <property type="project" value="UniProtKB-UniRule"/>
</dbReference>
<dbReference type="GO" id="GO:0006400">
    <property type="term" value="P:tRNA modification"/>
    <property type="evidence" value="ECO:0007669"/>
    <property type="project" value="UniProtKB-UniRule"/>
</dbReference>
<dbReference type="CDD" id="cd01518">
    <property type="entry name" value="RHOD_YceA"/>
    <property type="match status" value="1"/>
</dbReference>
<dbReference type="Gene3D" id="3.30.70.100">
    <property type="match status" value="1"/>
</dbReference>
<dbReference type="Gene3D" id="3.40.250.10">
    <property type="entry name" value="Rhodanese-like domain"/>
    <property type="match status" value="1"/>
</dbReference>
<dbReference type="HAMAP" id="MF_00469">
    <property type="entry name" value="TrhO"/>
    <property type="match status" value="1"/>
</dbReference>
<dbReference type="InterPro" id="IPR001763">
    <property type="entry name" value="Rhodanese-like_dom"/>
</dbReference>
<dbReference type="InterPro" id="IPR036873">
    <property type="entry name" value="Rhodanese-like_dom_sf"/>
</dbReference>
<dbReference type="InterPro" id="IPR022111">
    <property type="entry name" value="Rhodanese_C"/>
</dbReference>
<dbReference type="InterPro" id="IPR020936">
    <property type="entry name" value="TrhO"/>
</dbReference>
<dbReference type="InterPro" id="IPR040503">
    <property type="entry name" value="TRHO_N"/>
</dbReference>
<dbReference type="PANTHER" id="PTHR43268:SF3">
    <property type="entry name" value="RHODANESE-LIKE DOMAIN-CONTAINING PROTEIN 7-RELATED"/>
    <property type="match status" value="1"/>
</dbReference>
<dbReference type="PANTHER" id="PTHR43268">
    <property type="entry name" value="THIOSULFATE SULFURTRANSFERASE/RHODANESE-LIKE DOMAIN-CONTAINING PROTEIN 2"/>
    <property type="match status" value="1"/>
</dbReference>
<dbReference type="Pfam" id="PF00581">
    <property type="entry name" value="Rhodanese"/>
    <property type="match status" value="1"/>
</dbReference>
<dbReference type="Pfam" id="PF12368">
    <property type="entry name" value="Rhodanese_C"/>
    <property type="match status" value="1"/>
</dbReference>
<dbReference type="Pfam" id="PF17773">
    <property type="entry name" value="UPF0176_N"/>
    <property type="match status" value="1"/>
</dbReference>
<dbReference type="SMART" id="SM00450">
    <property type="entry name" value="RHOD"/>
    <property type="match status" value="1"/>
</dbReference>
<dbReference type="SUPFAM" id="SSF52821">
    <property type="entry name" value="Rhodanese/Cell cycle control phosphatase"/>
    <property type="match status" value="1"/>
</dbReference>
<dbReference type="PROSITE" id="PS50206">
    <property type="entry name" value="RHODANESE_3"/>
    <property type="match status" value="1"/>
</dbReference>
<feature type="chain" id="PRO_0000161447" description="tRNA uridine(34) hydroxylase">
    <location>
        <begin position="1"/>
        <end position="350"/>
    </location>
</feature>
<feature type="domain" description="Rhodanese" evidence="1">
    <location>
        <begin position="128"/>
        <end position="221"/>
    </location>
</feature>
<feature type="active site" description="Cysteine persulfide intermediate" evidence="1">
    <location>
        <position position="181"/>
    </location>
</feature>
<proteinExistence type="inferred from homology"/>
<accession>Q6ML86</accession>
<keyword id="KW-0560">Oxidoreductase</keyword>
<keyword id="KW-1185">Reference proteome</keyword>
<keyword id="KW-0819">tRNA processing</keyword>
<name>TRHO_BDEBA</name>
<evidence type="ECO:0000255" key="1">
    <source>
        <dbReference type="HAMAP-Rule" id="MF_00469"/>
    </source>
</evidence>
<reference key="1">
    <citation type="journal article" date="2004" name="Science">
        <title>A predator unmasked: life cycle of Bdellovibrio bacteriovorus from a genomic perspective.</title>
        <authorList>
            <person name="Rendulic S."/>
            <person name="Jagtap P."/>
            <person name="Rosinus A."/>
            <person name="Eppinger M."/>
            <person name="Baar C."/>
            <person name="Lanz C."/>
            <person name="Keller H."/>
            <person name="Lambert C."/>
            <person name="Evans K.J."/>
            <person name="Goesmann A."/>
            <person name="Meyer F."/>
            <person name="Sockett R.E."/>
            <person name="Schuster S.C."/>
        </authorList>
    </citation>
    <scope>NUCLEOTIDE SEQUENCE [LARGE SCALE GENOMIC DNA]</scope>
    <source>
        <strain>ATCC 15356 / DSM 50701 / NCIMB 9529 / HD100</strain>
    </source>
</reference>
<sequence length="350" mass="40111">MSESLNYYVTAYYRFTKLADLPAIQKALEDKAEELNVKGLVILGDEGYNSTCAASSIESFEAWKTFIREYFNSPDQFFKDSESTKSPFRRFKVKVRNEIVTTGIPGVMPPEGVNHHLSPTEWNKVMKEETDYVMIDTRNWYEYKIGTFKGALNPNIEKFTEFPQYIEAQGIPKDKKMLIFCTGGIRCEKGILELQDKGYNNVFQLDGGILNYMKEYPNDQFEGECFVFDHRVAVDQNLQPTTKFGLCPHCGQPSTIKIECKRCDAHELICEDCIKVEYAKDTCSKNCAYQLEKHPARKGQKQLVPFEIEKMKAEGKDTGSIPQIRVTRTKYISLNKNGEAETRSTKETAE</sequence>
<gene>
    <name evidence="1" type="primary">trhO</name>
    <name type="ordered locus">Bd2131</name>
</gene>
<organism>
    <name type="scientific">Bdellovibrio bacteriovorus (strain ATCC 15356 / DSM 50701 / NCIMB 9529 / HD100)</name>
    <dbReference type="NCBI Taxonomy" id="264462"/>
    <lineage>
        <taxon>Bacteria</taxon>
        <taxon>Pseudomonadati</taxon>
        <taxon>Bdellovibrionota</taxon>
        <taxon>Bdellovibrionia</taxon>
        <taxon>Bdellovibrionales</taxon>
        <taxon>Pseudobdellovibrionaceae</taxon>
        <taxon>Bdellovibrio</taxon>
    </lineage>
</organism>
<comment type="function">
    <text evidence="1">Catalyzes oxygen-dependent 5-hydroxyuridine (ho5U) modification at position 34 in tRNAs.</text>
</comment>
<comment type="catalytic activity">
    <reaction evidence="1">
        <text>uridine(34) in tRNA + AH2 + O2 = 5-hydroxyuridine(34) in tRNA + A + H2O</text>
        <dbReference type="Rhea" id="RHEA:64224"/>
        <dbReference type="Rhea" id="RHEA-COMP:11727"/>
        <dbReference type="Rhea" id="RHEA-COMP:13381"/>
        <dbReference type="ChEBI" id="CHEBI:13193"/>
        <dbReference type="ChEBI" id="CHEBI:15377"/>
        <dbReference type="ChEBI" id="CHEBI:15379"/>
        <dbReference type="ChEBI" id="CHEBI:17499"/>
        <dbReference type="ChEBI" id="CHEBI:65315"/>
        <dbReference type="ChEBI" id="CHEBI:136877"/>
    </reaction>
</comment>
<comment type="similarity">
    <text evidence="1">Belongs to the TrhO family.</text>
</comment>